<organism>
    <name type="scientific">Helicobacter pylori (strain P12)</name>
    <dbReference type="NCBI Taxonomy" id="570508"/>
    <lineage>
        <taxon>Bacteria</taxon>
        <taxon>Pseudomonadati</taxon>
        <taxon>Campylobacterota</taxon>
        <taxon>Epsilonproteobacteria</taxon>
        <taxon>Campylobacterales</taxon>
        <taxon>Helicobacteraceae</taxon>
        <taxon>Helicobacter</taxon>
    </lineage>
</organism>
<dbReference type="EMBL" id="CP001217">
    <property type="protein sequence ID" value="ACJ07987.1"/>
    <property type="molecule type" value="Genomic_DNA"/>
</dbReference>
<dbReference type="SMR" id="B6JM59"/>
<dbReference type="KEGG" id="hpp:HPP12_0835"/>
<dbReference type="HOGENOM" id="CLU_041018_2_2_7"/>
<dbReference type="Proteomes" id="UP000008198">
    <property type="component" value="Chromosome"/>
</dbReference>
<dbReference type="GO" id="GO:0005886">
    <property type="term" value="C:plasma membrane"/>
    <property type="evidence" value="ECO:0007669"/>
    <property type="project" value="UniProtKB-SubCell"/>
</dbReference>
<dbReference type="GO" id="GO:0045259">
    <property type="term" value="C:proton-transporting ATP synthase complex"/>
    <property type="evidence" value="ECO:0007669"/>
    <property type="project" value="UniProtKB-KW"/>
</dbReference>
<dbReference type="GO" id="GO:0046933">
    <property type="term" value="F:proton-transporting ATP synthase activity, rotational mechanism"/>
    <property type="evidence" value="ECO:0007669"/>
    <property type="project" value="UniProtKB-UniRule"/>
</dbReference>
<dbReference type="GO" id="GO:0042777">
    <property type="term" value="P:proton motive force-driven plasma membrane ATP synthesis"/>
    <property type="evidence" value="ECO:0007669"/>
    <property type="project" value="TreeGrafter"/>
</dbReference>
<dbReference type="CDD" id="cd00310">
    <property type="entry name" value="ATP-synt_Fo_a_6"/>
    <property type="match status" value="1"/>
</dbReference>
<dbReference type="FunFam" id="1.20.120.220:FF:000006">
    <property type="entry name" value="ATP synthase subunit a"/>
    <property type="match status" value="1"/>
</dbReference>
<dbReference type="Gene3D" id="1.20.120.220">
    <property type="entry name" value="ATP synthase, F0 complex, subunit A"/>
    <property type="match status" value="1"/>
</dbReference>
<dbReference type="HAMAP" id="MF_01393">
    <property type="entry name" value="ATP_synth_a_bact"/>
    <property type="match status" value="1"/>
</dbReference>
<dbReference type="InterPro" id="IPR045082">
    <property type="entry name" value="ATP_syn_F0_a_bact/chloroplast"/>
</dbReference>
<dbReference type="InterPro" id="IPR000568">
    <property type="entry name" value="ATP_synth_F0_asu"/>
</dbReference>
<dbReference type="InterPro" id="IPR023011">
    <property type="entry name" value="ATP_synth_F0_asu_AS"/>
</dbReference>
<dbReference type="InterPro" id="IPR035908">
    <property type="entry name" value="F0_ATP_A_sf"/>
</dbReference>
<dbReference type="NCBIfam" id="TIGR01131">
    <property type="entry name" value="ATP_synt_6_or_A"/>
    <property type="match status" value="1"/>
</dbReference>
<dbReference type="NCBIfam" id="NF004481">
    <property type="entry name" value="PRK05815.2-3"/>
    <property type="match status" value="1"/>
</dbReference>
<dbReference type="PANTHER" id="PTHR42823">
    <property type="entry name" value="ATP SYNTHASE SUBUNIT A, CHLOROPLASTIC"/>
    <property type="match status" value="1"/>
</dbReference>
<dbReference type="PANTHER" id="PTHR42823:SF3">
    <property type="entry name" value="ATP SYNTHASE SUBUNIT A, CHLOROPLASTIC"/>
    <property type="match status" value="1"/>
</dbReference>
<dbReference type="Pfam" id="PF00119">
    <property type="entry name" value="ATP-synt_A"/>
    <property type="match status" value="1"/>
</dbReference>
<dbReference type="PRINTS" id="PR00123">
    <property type="entry name" value="ATPASEA"/>
</dbReference>
<dbReference type="SUPFAM" id="SSF81336">
    <property type="entry name" value="F1F0 ATP synthase subunit A"/>
    <property type="match status" value="1"/>
</dbReference>
<dbReference type="PROSITE" id="PS00449">
    <property type="entry name" value="ATPASE_A"/>
    <property type="match status" value="1"/>
</dbReference>
<reference key="1">
    <citation type="submission" date="2008-10" db="EMBL/GenBank/DDBJ databases">
        <title>The complete genome sequence of Helicobacter pylori strain P12.</title>
        <authorList>
            <person name="Fischer W."/>
            <person name="Windhager L."/>
            <person name="Karnholz A."/>
            <person name="Zeiller M."/>
            <person name="Zimmer R."/>
            <person name="Haas R."/>
        </authorList>
    </citation>
    <scope>NUCLEOTIDE SEQUENCE [LARGE SCALE GENOMIC DNA]</scope>
    <source>
        <strain>P12</strain>
    </source>
</reference>
<comment type="function">
    <text evidence="1">Key component of the proton channel; it plays a direct role in the translocation of protons across the membrane.</text>
</comment>
<comment type="subunit">
    <text evidence="1">F-type ATPases have 2 components, CF(1) - the catalytic core - and CF(0) - the membrane proton channel. CF(1) has five subunits: alpha(3), beta(3), gamma(1), delta(1), epsilon(1). CF(0) has three main subunits: a(1), b(2) and c(9-12). The alpha and beta chains form an alternating ring which encloses part of the gamma chain. CF(1) is attached to CF(0) by a central stalk formed by the gamma and epsilon chains, while a peripheral stalk is formed by the delta and b chains.</text>
</comment>
<comment type="subcellular location">
    <subcellularLocation>
        <location evidence="1">Cell inner membrane</location>
        <topology evidence="1">Multi-pass membrane protein</topology>
    </subcellularLocation>
</comment>
<comment type="similarity">
    <text evidence="1">Belongs to the ATPase A chain family.</text>
</comment>
<proteinExistence type="inferred from homology"/>
<sequence>MEHRVFTIANFFSSNHDFITGFFVVLTAVLMFFISLGASRKMQMVPMGLQNVYESIISAILSVAKDIIGEELARKYFPLAGTIALYVFFSNMIGIIPGFESPTASWSFTLVLALIVFFYYHFEGIRVQGFFKYFAHFAGPVKWLAPFMFPIEIISHFSRIVSLSFRLFGNIKGDDMFLLIMLLLVPWAVPVAPFMVLFFMGILQAFVFMILTYVYLAGAVLTDEGH</sequence>
<feature type="chain" id="PRO_1000145279" description="ATP synthase subunit a">
    <location>
        <begin position="1"/>
        <end position="226"/>
    </location>
</feature>
<feature type="transmembrane region" description="Helical" evidence="1">
    <location>
        <begin position="18"/>
        <end position="38"/>
    </location>
</feature>
<feature type="transmembrane region" description="Helical" evidence="1">
    <location>
        <begin position="79"/>
        <end position="99"/>
    </location>
</feature>
<feature type="transmembrane region" description="Helical" evidence="1">
    <location>
        <begin position="105"/>
        <end position="125"/>
    </location>
</feature>
<feature type="transmembrane region" description="Helical" evidence="1">
    <location>
        <begin position="134"/>
        <end position="154"/>
    </location>
</feature>
<feature type="transmembrane region" description="Helical" evidence="1">
    <location>
        <begin position="179"/>
        <end position="199"/>
    </location>
</feature>
<feature type="transmembrane region" description="Helical" evidence="1">
    <location>
        <begin position="201"/>
        <end position="221"/>
    </location>
</feature>
<name>ATP6_HELP2</name>
<accession>B6JM59</accession>
<protein>
    <recommendedName>
        <fullName evidence="1">ATP synthase subunit a</fullName>
    </recommendedName>
    <alternativeName>
        <fullName evidence="1">ATP synthase F0 sector subunit a</fullName>
    </alternativeName>
    <alternativeName>
        <fullName evidence="1">F-ATPase subunit 6</fullName>
    </alternativeName>
</protein>
<keyword id="KW-0066">ATP synthesis</keyword>
<keyword id="KW-0997">Cell inner membrane</keyword>
<keyword id="KW-1003">Cell membrane</keyword>
<keyword id="KW-0138">CF(0)</keyword>
<keyword id="KW-0375">Hydrogen ion transport</keyword>
<keyword id="KW-0406">Ion transport</keyword>
<keyword id="KW-0472">Membrane</keyword>
<keyword id="KW-0812">Transmembrane</keyword>
<keyword id="KW-1133">Transmembrane helix</keyword>
<keyword id="KW-0813">Transport</keyword>
<gene>
    <name evidence="1" type="primary">atpB</name>
    <name type="ordered locus">HPP12_0835</name>
</gene>
<evidence type="ECO:0000255" key="1">
    <source>
        <dbReference type="HAMAP-Rule" id="MF_01393"/>
    </source>
</evidence>